<evidence type="ECO:0000255" key="1">
    <source>
        <dbReference type="PROSITE-ProRule" id="PRU00159"/>
    </source>
</evidence>
<evidence type="ECO:0000255" key="2">
    <source>
        <dbReference type="PROSITE-ProRule" id="PRU10027"/>
    </source>
</evidence>
<evidence type="ECO:0000256" key="3">
    <source>
        <dbReference type="SAM" id="MobiDB-lite"/>
    </source>
</evidence>
<evidence type="ECO:0000269" key="4">
    <source>
    </source>
</evidence>
<gene>
    <name type="primary">SBK2</name>
    <name type="synonym">SGK069</name>
</gene>
<proteinExistence type="evidence at protein level"/>
<reference key="1">
    <citation type="journal article" date="2004" name="Nature">
        <title>The DNA sequence and biology of human chromosome 19.</title>
        <authorList>
            <person name="Grimwood J."/>
            <person name="Gordon L.A."/>
            <person name="Olsen A.S."/>
            <person name="Terry A."/>
            <person name="Schmutz J."/>
            <person name="Lamerdin J.E."/>
            <person name="Hellsten U."/>
            <person name="Goodstein D."/>
            <person name="Couronne O."/>
            <person name="Tran-Gyamfi M."/>
            <person name="Aerts A."/>
            <person name="Altherr M."/>
            <person name="Ashworth L."/>
            <person name="Bajorek E."/>
            <person name="Black S."/>
            <person name="Branscomb E."/>
            <person name="Caenepeel S."/>
            <person name="Carrano A.V."/>
            <person name="Caoile C."/>
            <person name="Chan Y.M."/>
            <person name="Christensen M."/>
            <person name="Cleland C.A."/>
            <person name="Copeland A."/>
            <person name="Dalin E."/>
            <person name="Dehal P."/>
            <person name="Denys M."/>
            <person name="Detter J.C."/>
            <person name="Escobar J."/>
            <person name="Flowers D."/>
            <person name="Fotopulos D."/>
            <person name="Garcia C."/>
            <person name="Georgescu A.M."/>
            <person name="Glavina T."/>
            <person name="Gomez M."/>
            <person name="Gonzales E."/>
            <person name="Groza M."/>
            <person name="Hammon N."/>
            <person name="Hawkins T."/>
            <person name="Haydu L."/>
            <person name="Ho I."/>
            <person name="Huang W."/>
            <person name="Israni S."/>
            <person name="Jett J."/>
            <person name="Kadner K."/>
            <person name="Kimball H."/>
            <person name="Kobayashi A."/>
            <person name="Larionov V."/>
            <person name="Leem S.-H."/>
            <person name="Lopez F."/>
            <person name="Lou Y."/>
            <person name="Lowry S."/>
            <person name="Malfatti S."/>
            <person name="Martinez D."/>
            <person name="McCready P.M."/>
            <person name="Medina C."/>
            <person name="Morgan J."/>
            <person name="Nelson K."/>
            <person name="Nolan M."/>
            <person name="Ovcharenko I."/>
            <person name="Pitluck S."/>
            <person name="Pollard M."/>
            <person name="Popkie A.P."/>
            <person name="Predki P."/>
            <person name="Quan G."/>
            <person name="Ramirez L."/>
            <person name="Rash S."/>
            <person name="Retterer J."/>
            <person name="Rodriguez A."/>
            <person name="Rogers S."/>
            <person name="Salamov A."/>
            <person name="Salazar A."/>
            <person name="She X."/>
            <person name="Smith D."/>
            <person name="Slezak T."/>
            <person name="Solovyev V."/>
            <person name="Thayer N."/>
            <person name="Tice H."/>
            <person name="Tsai M."/>
            <person name="Ustaszewska A."/>
            <person name="Vo N."/>
            <person name="Wagner M."/>
            <person name="Wheeler J."/>
            <person name="Wu K."/>
            <person name="Xie G."/>
            <person name="Yang J."/>
            <person name="Dubchak I."/>
            <person name="Furey T.S."/>
            <person name="DeJong P."/>
            <person name="Dickson M."/>
            <person name="Gordon D."/>
            <person name="Eichler E.E."/>
            <person name="Pennacchio L.A."/>
            <person name="Richardson P."/>
            <person name="Stubbs L."/>
            <person name="Rokhsar D.S."/>
            <person name="Myers R.M."/>
            <person name="Rubin E.M."/>
            <person name="Lucas S.M."/>
        </authorList>
    </citation>
    <scope>NUCLEOTIDE SEQUENCE [LARGE SCALE GENOMIC DNA]</scope>
</reference>
<reference key="2">
    <citation type="journal article" date="2002" name="Science">
        <title>The protein kinase complement of the human genome.</title>
        <authorList>
            <person name="Manning G."/>
            <person name="Whyte D.B."/>
            <person name="Martinez R."/>
            <person name="Hunter T."/>
            <person name="Sudarsanam S."/>
        </authorList>
    </citation>
    <scope>IDENTIFICATION</scope>
</reference>
<reference key="3">
    <citation type="journal article" date="2007" name="Nature">
        <title>Patterns of somatic mutation in human cancer genomes.</title>
        <authorList>
            <person name="Greenman C."/>
            <person name="Stephens P."/>
            <person name="Smith R."/>
            <person name="Dalgliesh G.L."/>
            <person name="Hunter C."/>
            <person name="Bignell G."/>
            <person name="Davies H."/>
            <person name="Teague J."/>
            <person name="Butler A."/>
            <person name="Stevens C."/>
            <person name="Edkins S."/>
            <person name="O'Meara S."/>
            <person name="Vastrik I."/>
            <person name="Schmidt E.E."/>
            <person name="Avis T."/>
            <person name="Barthorpe S."/>
            <person name="Bhamra G."/>
            <person name="Buck G."/>
            <person name="Choudhury B."/>
            <person name="Clements J."/>
            <person name="Cole J."/>
            <person name="Dicks E."/>
            <person name="Forbes S."/>
            <person name="Gray K."/>
            <person name="Halliday K."/>
            <person name="Harrison R."/>
            <person name="Hills K."/>
            <person name="Hinton J."/>
            <person name="Jenkinson A."/>
            <person name="Jones D."/>
            <person name="Menzies A."/>
            <person name="Mironenko T."/>
            <person name="Perry J."/>
            <person name="Raine K."/>
            <person name="Richardson D."/>
            <person name="Shepherd R."/>
            <person name="Small A."/>
            <person name="Tofts C."/>
            <person name="Varian J."/>
            <person name="Webb T."/>
            <person name="West S."/>
            <person name="Widaa S."/>
            <person name="Yates A."/>
            <person name="Cahill D.P."/>
            <person name="Louis D.N."/>
            <person name="Goldstraw P."/>
            <person name="Nicholson A.G."/>
            <person name="Brasseur F."/>
            <person name="Looijenga L."/>
            <person name="Weber B.L."/>
            <person name="Chiew Y.-E."/>
            <person name="DeFazio A."/>
            <person name="Greaves M.F."/>
            <person name="Green A.R."/>
            <person name="Campbell P."/>
            <person name="Birney E."/>
            <person name="Easton D.F."/>
            <person name="Chenevix-Trench G."/>
            <person name="Tan M.-H."/>
            <person name="Khoo S.K."/>
            <person name="Teh B.T."/>
            <person name="Yuen S.T."/>
            <person name="Leung S.Y."/>
            <person name="Wooster R."/>
            <person name="Futreal P.A."/>
            <person name="Stratton M.R."/>
        </authorList>
    </citation>
    <scope>VARIANTS [LARGE SCALE ANALYSIS] LYS-20; GLU-41 AND ASP-102</scope>
</reference>
<keyword id="KW-0067">ATP-binding</keyword>
<keyword id="KW-0418">Kinase</keyword>
<keyword id="KW-0547">Nucleotide-binding</keyword>
<keyword id="KW-1267">Proteomics identification</keyword>
<keyword id="KW-1185">Reference proteome</keyword>
<keyword id="KW-0723">Serine/threonine-protein kinase</keyword>
<keyword id="KW-0808">Transferase</keyword>
<organism>
    <name type="scientific">Homo sapiens</name>
    <name type="common">Human</name>
    <dbReference type="NCBI Taxonomy" id="9606"/>
    <lineage>
        <taxon>Eukaryota</taxon>
        <taxon>Metazoa</taxon>
        <taxon>Chordata</taxon>
        <taxon>Craniata</taxon>
        <taxon>Vertebrata</taxon>
        <taxon>Euteleostomi</taxon>
        <taxon>Mammalia</taxon>
        <taxon>Eutheria</taxon>
        <taxon>Euarchontoglires</taxon>
        <taxon>Primates</taxon>
        <taxon>Haplorrhini</taxon>
        <taxon>Catarrhini</taxon>
        <taxon>Hominidae</taxon>
        <taxon>Homo</taxon>
    </lineage>
</organism>
<accession>P0C263</accession>
<feature type="chain" id="PRO_0000262994" description="Serine/threonine-protein kinase SBK2">
    <location>
        <begin position="1"/>
        <end position="348"/>
    </location>
</feature>
<feature type="domain" description="Protein kinase" evidence="1">
    <location>
        <begin position="62"/>
        <end position="330"/>
    </location>
</feature>
<feature type="region of interest" description="Disordered" evidence="3">
    <location>
        <begin position="1"/>
        <end position="25"/>
    </location>
</feature>
<feature type="active site" description="Proton acceptor" evidence="1 2">
    <location>
        <position position="183"/>
    </location>
</feature>
<feature type="binding site" evidence="1">
    <location>
        <begin position="68"/>
        <end position="76"/>
    </location>
    <ligand>
        <name>ATP</name>
        <dbReference type="ChEBI" id="CHEBI:30616"/>
    </ligand>
</feature>
<feature type="binding site" evidence="1">
    <location>
        <position position="91"/>
    </location>
    <ligand>
        <name>ATP</name>
        <dbReference type="ChEBI" id="CHEBI:30616"/>
    </ligand>
</feature>
<feature type="sequence variant" id="VAR_041077" description="In dbSNP:rs34316437." evidence="4">
    <original>E</original>
    <variation>K</variation>
    <location>
        <position position="20"/>
    </location>
</feature>
<feature type="sequence variant" id="VAR_041078" evidence="4">
    <original>A</original>
    <variation>E</variation>
    <location>
        <position position="41"/>
    </location>
</feature>
<feature type="sequence variant" id="VAR_041079" description="In dbSNP:rs56158623." evidence="4">
    <original>G</original>
    <variation>D</variation>
    <location>
        <position position="102"/>
    </location>
</feature>
<comment type="catalytic activity">
    <reaction>
        <text>L-seryl-[protein] + ATP = O-phospho-L-seryl-[protein] + ADP + H(+)</text>
        <dbReference type="Rhea" id="RHEA:17989"/>
        <dbReference type="Rhea" id="RHEA-COMP:9863"/>
        <dbReference type="Rhea" id="RHEA-COMP:11604"/>
        <dbReference type="ChEBI" id="CHEBI:15378"/>
        <dbReference type="ChEBI" id="CHEBI:29999"/>
        <dbReference type="ChEBI" id="CHEBI:30616"/>
        <dbReference type="ChEBI" id="CHEBI:83421"/>
        <dbReference type="ChEBI" id="CHEBI:456216"/>
        <dbReference type="EC" id="2.7.11.1"/>
    </reaction>
</comment>
<comment type="catalytic activity">
    <reaction>
        <text>L-threonyl-[protein] + ATP = O-phospho-L-threonyl-[protein] + ADP + H(+)</text>
        <dbReference type="Rhea" id="RHEA:46608"/>
        <dbReference type="Rhea" id="RHEA-COMP:11060"/>
        <dbReference type="Rhea" id="RHEA-COMP:11605"/>
        <dbReference type="ChEBI" id="CHEBI:15378"/>
        <dbReference type="ChEBI" id="CHEBI:30013"/>
        <dbReference type="ChEBI" id="CHEBI:30616"/>
        <dbReference type="ChEBI" id="CHEBI:61977"/>
        <dbReference type="ChEBI" id="CHEBI:456216"/>
        <dbReference type="EC" id="2.7.11.1"/>
    </reaction>
</comment>
<comment type="similarity">
    <text evidence="1">Belongs to the protein kinase superfamily. Ser/Thr protein kinase family. STKL subfamily.</text>
</comment>
<sequence>MPGKQSEEGPAEAGASEDSEEEGLGGLTLEELQQGQEAARALEDMMTLSAQTLVRAEVDELYEEVRPLGQGCYGRVLLVTHRQKGTPLALKQLPKPRTSLRGFLYEFCVGLSLGAHSAIVTAYGIGIESAHSYSFLTEPVLHGDLMAFIQPKVGLPQPAVHRCAAQLASALEYIHARGLVYRDLKPENVLVCDPACRRFKLTDFGHTRPRGTLLRLAGPPIPYTAPELCAPPPLPEGLPIQPALDAWALGVLLFCLLTGYFPWDRPLAEADPFYEDFLIWQASGQPRDRPQPWFGLAAAADALLRGLLDPHPRRRSAVIAIREHLGRPWRQREGEAEAVGAVEEEAGQ</sequence>
<name>SBK2_HUMAN</name>
<dbReference type="EC" id="2.7.11.1"/>
<dbReference type="EMBL" id="AC008735">
    <property type="status" value="NOT_ANNOTATED_CDS"/>
    <property type="molecule type" value="Genomic_DNA"/>
</dbReference>
<dbReference type="CCDS" id="CCDS42631.1"/>
<dbReference type="RefSeq" id="NP_001094871.2">
    <property type="nucleotide sequence ID" value="NM_001101401.2"/>
</dbReference>
<dbReference type="RefSeq" id="NP_001357025.1">
    <property type="nucleotide sequence ID" value="NM_001370096.2"/>
</dbReference>
<dbReference type="RefSeq" id="XP_006723390.1">
    <property type="nucleotide sequence ID" value="XM_006723327.3"/>
</dbReference>
<dbReference type="SMR" id="P0C263"/>
<dbReference type="BioGRID" id="571490">
    <property type="interactions" value="6"/>
</dbReference>
<dbReference type="FunCoup" id="P0C263">
    <property type="interactions" value="214"/>
</dbReference>
<dbReference type="IntAct" id="P0C263">
    <property type="interactions" value="6"/>
</dbReference>
<dbReference type="STRING" id="9606.ENSP00000389015"/>
<dbReference type="BioMuta" id="SBK2"/>
<dbReference type="DMDM" id="254763329"/>
<dbReference type="MassIVE" id="P0C263"/>
<dbReference type="PaxDb" id="9606-ENSP00000389015"/>
<dbReference type="PeptideAtlas" id="P0C263"/>
<dbReference type="ProteomicsDB" id="52301"/>
<dbReference type="Antibodypedia" id="33118">
    <property type="antibodies" value="44 antibodies from 15 providers"/>
</dbReference>
<dbReference type="Ensembl" id="ENST00000344158.4">
    <property type="protein sequence ID" value="ENSP00000345044.3"/>
    <property type="gene ID" value="ENSG00000187550.9"/>
</dbReference>
<dbReference type="Ensembl" id="ENST00000413299.6">
    <property type="protein sequence ID" value="ENSP00000389015.2"/>
    <property type="gene ID" value="ENSG00000187550.9"/>
</dbReference>
<dbReference type="GeneID" id="646643"/>
<dbReference type="MANE-Select" id="ENST00000413299.6">
    <property type="protein sequence ID" value="ENSP00000389015.2"/>
    <property type="RefSeq nucleotide sequence ID" value="NM_001370096.2"/>
    <property type="RefSeq protein sequence ID" value="NP_001357025.1"/>
</dbReference>
<dbReference type="UCSC" id="uc032ifw.2">
    <property type="organism name" value="human"/>
</dbReference>
<dbReference type="AGR" id="HGNC:34416"/>
<dbReference type="GeneCards" id="SBK2"/>
<dbReference type="HGNC" id="HGNC:34416">
    <property type="gene designation" value="SBK2"/>
</dbReference>
<dbReference type="HPA" id="ENSG00000187550">
    <property type="expression patterns" value="Group enriched (heart muscle, tongue)"/>
</dbReference>
<dbReference type="MIM" id="620414">
    <property type="type" value="gene"/>
</dbReference>
<dbReference type="neXtProt" id="NX_P0C263"/>
<dbReference type="OpenTargets" id="ENSG00000187550"/>
<dbReference type="VEuPathDB" id="HostDB:ENSG00000187550"/>
<dbReference type="eggNOG" id="KOG1345">
    <property type="taxonomic scope" value="Eukaryota"/>
</dbReference>
<dbReference type="GeneTree" id="ENSGT00940000161663"/>
<dbReference type="HOGENOM" id="CLU_000288_10_0_1"/>
<dbReference type="InParanoid" id="P0C263"/>
<dbReference type="OMA" id="HRQKGTT"/>
<dbReference type="OrthoDB" id="6513151at2759"/>
<dbReference type="PAN-GO" id="P0C263">
    <property type="GO annotations" value="2 GO annotations based on evolutionary models"/>
</dbReference>
<dbReference type="PhylomeDB" id="P0C263"/>
<dbReference type="TreeFam" id="TF326736"/>
<dbReference type="PathwayCommons" id="P0C263"/>
<dbReference type="SignaLink" id="P0C263"/>
<dbReference type="BioGRID-ORCS" id="646643">
    <property type="hits" value="13 hits in 1179 CRISPR screens"/>
</dbReference>
<dbReference type="ChiTaRS" id="SBK2">
    <property type="organism name" value="human"/>
</dbReference>
<dbReference type="GenomeRNAi" id="646643"/>
<dbReference type="Pharos" id="P0C263">
    <property type="development level" value="Tdark"/>
</dbReference>
<dbReference type="PRO" id="PR:P0C263"/>
<dbReference type="Proteomes" id="UP000005640">
    <property type="component" value="Chromosome 19"/>
</dbReference>
<dbReference type="RNAct" id="P0C263">
    <property type="molecule type" value="protein"/>
</dbReference>
<dbReference type="Bgee" id="ENSG00000187550">
    <property type="expression patterns" value="Expressed in right atrium auricular region and 46 other cell types or tissues"/>
</dbReference>
<dbReference type="GO" id="GO:0005524">
    <property type="term" value="F:ATP binding"/>
    <property type="evidence" value="ECO:0007669"/>
    <property type="project" value="UniProtKB-KW"/>
</dbReference>
<dbReference type="GO" id="GO:0004708">
    <property type="term" value="F:MAP kinase kinase activity"/>
    <property type="evidence" value="ECO:0000318"/>
    <property type="project" value="GO_Central"/>
</dbReference>
<dbReference type="GO" id="GO:0106310">
    <property type="term" value="F:protein serine kinase activity"/>
    <property type="evidence" value="ECO:0007669"/>
    <property type="project" value="RHEA"/>
</dbReference>
<dbReference type="GO" id="GO:0004674">
    <property type="term" value="F:protein serine/threonine kinase activity"/>
    <property type="evidence" value="ECO:0007669"/>
    <property type="project" value="UniProtKB-KW"/>
</dbReference>
<dbReference type="GO" id="GO:0000165">
    <property type="term" value="P:MAPK cascade"/>
    <property type="evidence" value="ECO:0000318"/>
    <property type="project" value="GO_Central"/>
</dbReference>
<dbReference type="FunFam" id="1.10.510.10:FF:000515">
    <property type="entry name" value="serine/threonine-protein kinase SBK2"/>
    <property type="match status" value="1"/>
</dbReference>
<dbReference type="Gene3D" id="1.10.510.10">
    <property type="entry name" value="Transferase(Phosphotransferase) domain 1"/>
    <property type="match status" value="1"/>
</dbReference>
<dbReference type="InterPro" id="IPR011009">
    <property type="entry name" value="Kinase-like_dom_sf"/>
</dbReference>
<dbReference type="InterPro" id="IPR000719">
    <property type="entry name" value="Prot_kinase_dom"/>
</dbReference>
<dbReference type="InterPro" id="IPR017441">
    <property type="entry name" value="Protein_kinase_ATP_BS"/>
</dbReference>
<dbReference type="InterPro" id="IPR008271">
    <property type="entry name" value="Ser/Thr_kinase_AS"/>
</dbReference>
<dbReference type="PANTHER" id="PTHR24359:SF34">
    <property type="entry name" value="PROTEIN KINASE DOMAIN-CONTAINING PROTEIN"/>
    <property type="match status" value="1"/>
</dbReference>
<dbReference type="PANTHER" id="PTHR24359">
    <property type="entry name" value="SERINE/THREONINE-PROTEIN KINASE SBK1"/>
    <property type="match status" value="1"/>
</dbReference>
<dbReference type="Pfam" id="PF00069">
    <property type="entry name" value="Pkinase"/>
    <property type="match status" value="1"/>
</dbReference>
<dbReference type="SMART" id="SM00220">
    <property type="entry name" value="S_TKc"/>
    <property type="match status" value="1"/>
</dbReference>
<dbReference type="SUPFAM" id="SSF56112">
    <property type="entry name" value="Protein kinase-like (PK-like)"/>
    <property type="match status" value="1"/>
</dbReference>
<dbReference type="PROSITE" id="PS00107">
    <property type="entry name" value="PROTEIN_KINASE_ATP"/>
    <property type="match status" value="1"/>
</dbReference>
<dbReference type="PROSITE" id="PS50011">
    <property type="entry name" value="PROTEIN_KINASE_DOM"/>
    <property type="match status" value="1"/>
</dbReference>
<dbReference type="PROSITE" id="PS00108">
    <property type="entry name" value="PROTEIN_KINASE_ST"/>
    <property type="match status" value="1"/>
</dbReference>
<protein>
    <recommendedName>
        <fullName>Serine/threonine-protein kinase SBK2</fullName>
        <ecNumber>2.7.11.1</ecNumber>
    </recommendedName>
    <alternativeName>
        <fullName>SH3 domain-binding kinase family member 2</fullName>
    </alternativeName>
    <alternativeName>
        <fullName>Sugen kinase 69</fullName>
        <shortName>SgK069</shortName>
    </alternativeName>
</protein>